<proteinExistence type="evidence at protein level"/>
<comment type="function">
    <text evidence="3">Causes a significant and dose-dependent histamine release, probably by influencing the signal transduction of mast cells through a non-IgE-mediated pathway. This peptide does not have cytotoxic activities.</text>
</comment>
<comment type="subunit">
    <text evidence="2 3">Homodimer; disulfide-linked.</text>
</comment>
<comment type="subcellular location">
    <subcellularLocation>
        <location evidence="3">Secreted</location>
    </subcellularLocation>
</comment>
<comment type="tissue specificity">
    <text evidence="3">Expressed by the venom gland and reservoir.</text>
</comment>
<comment type="mass spectrometry"/>
<comment type="similarity">
    <text evidence="6">Belongs to the formicidae venom precursor-01 superfamily. Ant pilosulin family.</text>
</comment>
<comment type="caution">
    <text evidence="6">M.banksi is a member of the M.pilosula complex, but is clearly distinct from M.pilosula species. It is why the nomenclature proposed by Touchard et al., 2016 is slightly modified in this entry.</text>
</comment>
<evidence type="ECO:0000255" key="1"/>
<evidence type="ECO:0000269" key="2">
    <source>
    </source>
</evidence>
<evidence type="ECO:0000269" key="3">
    <source>
    </source>
</evidence>
<evidence type="ECO:0000303" key="4">
    <source>
    </source>
</evidence>
<evidence type="ECO:0000303" key="5">
    <source>
    </source>
</evidence>
<evidence type="ECO:0000305" key="6"/>
<evidence type="ECO:0000305" key="7">
    <source>
    </source>
</evidence>
<evidence type="ECO:0000312" key="8">
    <source>
        <dbReference type="EMBL" id="BAF95069.1"/>
    </source>
</evidence>
<name>TX3A_MYRBA</name>
<reference key="1">
    <citation type="journal article" date="2008" name="Arch. Biochem. Biophys.">
        <title>Pilosulin 5, a novel histamine-releasing peptide of the Australian ant, Myrmecia pilosula (Jack Jumper Ant).</title>
        <authorList>
            <person name="Inagaki H."/>
            <person name="Akagi M."/>
            <person name="Imai H.T."/>
            <person name="Taylor R.W."/>
            <person name="Wiese M.D."/>
            <person name="Davies N.W."/>
            <person name="Kubo T."/>
        </authorList>
    </citation>
    <scope>NUCLEOTIDE SEQUENCE [MRNA]</scope>
    <scope>SYNTHESIS OF 55-91</scope>
    <scope>FUNCTION</scope>
    <scope>IDENTIFICATION BY MASS SPECTROMETRY</scope>
    <scope>DISULFIDE BOND</scope>
    <scope>SUBCELLULAR LOCATION</scope>
    <scope>TISSUE SPECIFICITY</scope>
    <source>
        <tissue>Venom</tissue>
        <tissue>Venom gland</tissue>
    </source>
</reference>
<reference key="2">
    <citation type="journal article" date="2006" name="Toxicon">
        <title>Proteomic analysis of Myrmecia pilosula (jack jumper) ant venom.</title>
        <authorList>
            <person name="Wiese M.D."/>
            <person name="Chataway T.K."/>
            <person name="Davies N.W."/>
            <person name="Milne R.W."/>
            <person name="Brown S.G."/>
            <person name="Gai W.P."/>
            <person name="Heddle R.J."/>
        </authorList>
    </citation>
    <scope>MASS SPECTROMETRY</scope>
    <scope>SUBUNIT</scope>
    <source>
        <tissue>Venom</tissue>
    </source>
</reference>
<reference key="3">
    <citation type="journal article" date="2016" name="Toxins">
        <title>The biochemical toxin arsenal from ant venoms.</title>
        <authorList>
            <person name="Touchard A."/>
            <person name="Aili S.R."/>
            <person name="Fox E.G."/>
            <person name="Escoubas P."/>
            <person name="Orivel J."/>
            <person name="Nicholson G.M."/>
            <person name="Dejean A."/>
        </authorList>
    </citation>
    <scope>REVIEW</scope>
    <scope>NOMENCLATURE</scope>
</reference>
<dbReference type="EMBL" id="AB219975">
    <property type="protein sequence ID" value="BAF95069.1"/>
    <property type="molecule type" value="mRNA"/>
</dbReference>
<dbReference type="SMR" id="A9CM07"/>
<dbReference type="GO" id="GO:0005576">
    <property type="term" value="C:extracellular region"/>
    <property type="evidence" value="ECO:0007669"/>
    <property type="project" value="UniProtKB-SubCell"/>
</dbReference>
<dbReference type="InterPro" id="IPR049518">
    <property type="entry name" value="Pilosulin"/>
</dbReference>
<dbReference type="Pfam" id="PF17499">
    <property type="entry name" value="Pilosulin"/>
    <property type="match status" value="1"/>
</dbReference>
<accession>A9CM07</accession>
<organism>
    <name type="scientific">Myrmecia banksi</name>
    <name type="common">Jack jumper ant</name>
    <name type="synonym">Australian jumper ant</name>
    <dbReference type="NCBI Taxonomy" id="36171"/>
    <lineage>
        <taxon>Eukaryota</taxon>
        <taxon>Metazoa</taxon>
        <taxon>Ecdysozoa</taxon>
        <taxon>Arthropoda</taxon>
        <taxon>Hexapoda</taxon>
        <taxon>Insecta</taxon>
        <taxon>Pterygota</taxon>
        <taxon>Neoptera</taxon>
        <taxon>Endopterygota</taxon>
        <taxon>Hymenoptera</taxon>
        <taxon>Apocrita</taxon>
        <taxon>Aculeata</taxon>
        <taxon>Formicoidea</taxon>
        <taxon>Formicidae</taxon>
        <taxon>Myrmeciinae</taxon>
        <taxon>Myrmeciini</taxon>
        <taxon>Myrmecia</taxon>
    </lineage>
</organism>
<protein>
    <recommendedName>
        <fullName evidence="6">M-myrmeciitoxin-Mb3a</fullName>
        <shortName evidence="6">M-MIITX-Mb3a</shortName>
    </recommendedName>
    <alternativeName>
        <fullName evidence="5">M-myrmeciitoxin-Mp4a</fullName>
        <shortName evidence="5">M-MIITX-Mp4a</shortName>
    </alternativeName>
    <alternativeName>
        <fullName evidence="8">Myrb5</fullName>
    </alternativeName>
    <alternativeName>
        <fullName evidence="4">Pilosulin-5</fullName>
    </alternativeName>
</protein>
<sequence>MKLSCLSLALAIILILAIVHSPNMEVKALADPEADAFGEANAFGEADAFAEANADVKGMKKAIKEILDCVIEKGYDKLAAKLKKVIQQLWE</sequence>
<keyword id="KW-1015">Disulfide bond</keyword>
<keyword id="KW-0964">Secreted</keyword>
<keyword id="KW-0732">Signal</keyword>
<feature type="signal peptide" evidence="1">
    <location>
        <begin position="1"/>
        <end position="21"/>
    </location>
</feature>
<feature type="propeptide" id="PRO_0000412825" evidence="7">
    <location>
        <begin position="22"/>
        <end position="54"/>
    </location>
</feature>
<feature type="chain" id="PRO_5000287686" description="M-myrmeciitoxin-Mb3a" evidence="7">
    <location>
        <begin position="55"/>
        <end position="91"/>
    </location>
</feature>
<feature type="disulfide bond" description="Interchain" evidence="3">
    <location>
        <position position="69"/>
    </location>
</feature>